<accession>Q3USS3</accession>
<accession>B9EKF0</accession>
<comment type="function">
    <text evidence="1 2 6">Component of the nexin-dynein regulatory complex (N-DRC) a key regulator of ciliary/flagellar motility which maintains the alignment and integrity of the distal axoneme and regulates microtubule sliding in motile axonemes. Plays a critical role in the assembly of N-DRC and also stabilizes the assembly of multiple inner dynein arms and radial spokes (PubMed:34169321). Coassembles with CCDC65/DRC2 to form a central scaffold needed for assembly of the N-DRC and its attachment to the outer doublet microtubules.</text>
</comment>
<comment type="subunit">
    <text evidence="1 2">Component of the nexin-dynein regulatory complex (N-DRC). Interacts with CCDC65/DRC2, DRC3, GAS8/DRC4 and TCTE1/DRC5.</text>
</comment>
<comment type="subcellular location">
    <subcellularLocation>
        <location evidence="1">Cytoplasm</location>
        <location evidence="1">Cytoskeleton</location>
        <location evidence="1">Cilium axoneme</location>
    </subcellularLocation>
    <subcellularLocation>
        <location evidence="1">Cytoplasm</location>
        <location evidence="1">Cytoskeleton</location>
        <location evidence="1">Flagellum axoneme</location>
    </subcellularLocation>
</comment>
<comment type="developmental stage">
    <text evidence="5">At 7.5 dpc, expressed in the pit cells of the node, which carry motile cilia and are involved in left-right axis development.</text>
</comment>
<comment type="disruption phenotype">
    <text evidence="6">Knockout mice on a C57BL/6 background experience pre-puberal death, usually before postnatal day 12, and exhibit signs of growth retardation and hydrocephaly. Mutant mice on C57BL/6 x ICR background can survive to adulthood, are infertile, and have reduced sperm counts with short or absent flagella.</text>
</comment>
<comment type="similarity">
    <text evidence="7">Belongs to the DRC1 family.</text>
</comment>
<gene>
    <name type="primary">Drc1</name>
    <name type="synonym">Ccdc164</name>
    <name type="synonym">Gm1060</name>
</gene>
<name>DRC1_MOUSE</name>
<protein>
    <recommendedName>
        <fullName>Dynein regulatory complex protein 1</fullName>
    </recommendedName>
    <alternativeName>
        <fullName>Coiled-coil domain-containing protein 164</fullName>
    </alternativeName>
</protein>
<organism>
    <name type="scientific">Mus musculus</name>
    <name type="common">Mouse</name>
    <dbReference type="NCBI Taxonomy" id="10090"/>
    <lineage>
        <taxon>Eukaryota</taxon>
        <taxon>Metazoa</taxon>
        <taxon>Chordata</taxon>
        <taxon>Craniata</taxon>
        <taxon>Vertebrata</taxon>
        <taxon>Euteleostomi</taxon>
        <taxon>Mammalia</taxon>
        <taxon>Eutheria</taxon>
        <taxon>Euarchontoglires</taxon>
        <taxon>Glires</taxon>
        <taxon>Rodentia</taxon>
        <taxon>Myomorpha</taxon>
        <taxon>Muroidea</taxon>
        <taxon>Muridae</taxon>
        <taxon>Murinae</taxon>
        <taxon>Mus</taxon>
        <taxon>Mus</taxon>
    </lineage>
</organism>
<keyword id="KW-0966">Cell projection</keyword>
<keyword id="KW-0969">Cilium</keyword>
<keyword id="KW-0175">Coiled coil</keyword>
<keyword id="KW-0963">Cytoplasm</keyword>
<keyword id="KW-0206">Cytoskeleton</keyword>
<keyword id="KW-0282">Flagellum</keyword>
<keyword id="KW-1185">Reference proteome</keyword>
<dbReference type="EMBL" id="AK140154">
    <property type="protein sequence ID" value="BAE24258.1"/>
    <property type="molecule type" value="mRNA"/>
</dbReference>
<dbReference type="EMBL" id="BC150863">
    <property type="protein sequence ID" value="AAI50864.1"/>
    <property type="molecule type" value="mRNA"/>
</dbReference>
<dbReference type="CCDS" id="CCDS84857.1"/>
<dbReference type="RefSeq" id="NP_001028632.1">
    <property type="nucleotide sequence ID" value="NM_001033460.4"/>
</dbReference>
<dbReference type="SMR" id="Q3USS3"/>
<dbReference type="BioGRID" id="238065">
    <property type="interactions" value="2"/>
</dbReference>
<dbReference type="FunCoup" id="Q3USS3">
    <property type="interactions" value="61"/>
</dbReference>
<dbReference type="STRING" id="10090.ENSMUSP00000098992"/>
<dbReference type="TCDB" id="3.A.1.211.8">
    <property type="family name" value="the atp-binding cassette (abc) superfamily"/>
</dbReference>
<dbReference type="GlyGen" id="Q3USS3">
    <property type="glycosylation" value="2 sites, 1 O-linked glycan (1 site)"/>
</dbReference>
<dbReference type="iPTMnet" id="Q3USS3"/>
<dbReference type="PhosphoSitePlus" id="Q3USS3"/>
<dbReference type="SwissPalm" id="Q3USS3"/>
<dbReference type="PaxDb" id="10090-ENSMUSP00000098992"/>
<dbReference type="ProteomicsDB" id="279485"/>
<dbReference type="Antibodypedia" id="55104">
    <property type="antibodies" value="31 antibodies from 3 providers"/>
</dbReference>
<dbReference type="Ensembl" id="ENSMUST00000101448.5">
    <property type="protein sequence ID" value="ENSMUSP00000098992.4"/>
    <property type="gene ID" value="ENSMUSG00000073102.8"/>
</dbReference>
<dbReference type="GeneID" id="381738"/>
<dbReference type="KEGG" id="mmu:381738"/>
<dbReference type="UCSC" id="uc029vgu.1">
    <property type="organism name" value="mouse"/>
</dbReference>
<dbReference type="AGR" id="MGI:2685906"/>
<dbReference type="CTD" id="92749"/>
<dbReference type="MGI" id="MGI:2685906">
    <property type="gene designation" value="Drc1"/>
</dbReference>
<dbReference type="VEuPathDB" id="HostDB:ENSMUSG00000073102"/>
<dbReference type="eggNOG" id="ENOG502QQ2B">
    <property type="taxonomic scope" value="Eukaryota"/>
</dbReference>
<dbReference type="GeneTree" id="ENSGT00940000153804"/>
<dbReference type="HOGENOM" id="CLU_012489_1_0_1"/>
<dbReference type="InParanoid" id="Q3USS3"/>
<dbReference type="OMA" id="LDFMMAR"/>
<dbReference type="OrthoDB" id="10260459at2759"/>
<dbReference type="PhylomeDB" id="Q3USS3"/>
<dbReference type="TreeFam" id="TF324985"/>
<dbReference type="BioGRID-ORCS" id="381738">
    <property type="hits" value="1 hit in 54 CRISPR screens"/>
</dbReference>
<dbReference type="ChiTaRS" id="Drc1">
    <property type="organism name" value="mouse"/>
</dbReference>
<dbReference type="PRO" id="PR:Q3USS3"/>
<dbReference type="Proteomes" id="UP000000589">
    <property type="component" value="Chromosome 5"/>
</dbReference>
<dbReference type="RNAct" id="Q3USS3">
    <property type="molecule type" value="protein"/>
</dbReference>
<dbReference type="Bgee" id="ENSMUSG00000073102">
    <property type="expression patterns" value="Expressed in spermatid and 109 other cell types or tissues"/>
</dbReference>
<dbReference type="GO" id="GO:0005858">
    <property type="term" value="C:axonemal dynein complex"/>
    <property type="evidence" value="ECO:0007669"/>
    <property type="project" value="InterPro"/>
</dbReference>
<dbReference type="GO" id="GO:0005930">
    <property type="term" value="C:axoneme"/>
    <property type="evidence" value="ECO:0000250"/>
    <property type="project" value="UniProtKB"/>
</dbReference>
<dbReference type="GO" id="GO:0005929">
    <property type="term" value="C:cilium"/>
    <property type="evidence" value="ECO:0000315"/>
    <property type="project" value="MGI"/>
</dbReference>
<dbReference type="GO" id="GO:0005829">
    <property type="term" value="C:cytosol"/>
    <property type="evidence" value="ECO:0000314"/>
    <property type="project" value="MGI"/>
</dbReference>
<dbReference type="GO" id="GO:0005576">
    <property type="term" value="C:extracellular region"/>
    <property type="evidence" value="ECO:0007669"/>
    <property type="project" value="GOC"/>
</dbReference>
<dbReference type="GO" id="GO:0036126">
    <property type="term" value="C:sperm flagellum"/>
    <property type="evidence" value="ECO:0000315"/>
    <property type="project" value="MGI"/>
</dbReference>
<dbReference type="GO" id="GO:0070286">
    <property type="term" value="P:axonemal dynein complex assembly"/>
    <property type="evidence" value="ECO:0000250"/>
    <property type="project" value="UniProtKB"/>
</dbReference>
<dbReference type="GO" id="GO:0035082">
    <property type="term" value="P:axoneme assembly"/>
    <property type="evidence" value="ECO:0000315"/>
    <property type="project" value="MGI"/>
</dbReference>
<dbReference type="GO" id="GO:0044782">
    <property type="term" value="P:cilium organization"/>
    <property type="evidence" value="ECO:0000315"/>
    <property type="project" value="MGI"/>
</dbReference>
<dbReference type="GO" id="GO:0060285">
    <property type="term" value="P:cilium-dependent cell motility"/>
    <property type="evidence" value="ECO:0000250"/>
    <property type="project" value="UniProtKB"/>
</dbReference>
<dbReference type="GO" id="GO:0007368">
    <property type="term" value="P:determination of left/right symmetry"/>
    <property type="evidence" value="ECO:0000315"/>
    <property type="project" value="MGI"/>
</dbReference>
<dbReference type="GO" id="GO:0030317">
    <property type="term" value="P:flagellated sperm motility"/>
    <property type="evidence" value="ECO:0000315"/>
    <property type="project" value="MGI"/>
</dbReference>
<dbReference type="GO" id="GO:0007507">
    <property type="term" value="P:heart development"/>
    <property type="evidence" value="ECO:0000315"/>
    <property type="project" value="MGI"/>
</dbReference>
<dbReference type="GO" id="GO:0120197">
    <property type="term" value="P:mucociliary clearance"/>
    <property type="evidence" value="ECO:0000315"/>
    <property type="project" value="MGI"/>
</dbReference>
<dbReference type="GO" id="GO:0065003">
    <property type="term" value="P:protein-containing complex assembly"/>
    <property type="evidence" value="ECO:0000315"/>
    <property type="project" value="MGI"/>
</dbReference>
<dbReference type="GO" id="GO:0007338">
    <property type="term" value="P:single fertilization"/>
    <property type="evidence" value="ECO:0000315"/>
    <property type="project" value="MGI"/>
</dbReference>
<dbReference type="GO" id="GO:0120316">
    <property type="term" value="P:sperm flagellum assembly"/>
    <property type="evidence" value="ECO:0000315"/>
    <property type="project" value="MGI"/>
</dbReference>
<dbReference type="InterPro" id="IPR039505">
    <property type="entry name" value="DRC1/2_N"/>
</dbReference>
<dbReference type="InterPro" id="IPR039750">
    <property type="entry name" value="DRC1/DRC2"/>
</dbReference>
<dbReference type="InterPro" id="IPR029440">
    <property type="entry name" value="DRC1_C"/>
</dbReference>
<dbReference type="PANTHER" id="PTHR21625:SF1">
    <property type="entry name" value="DYNEIN REGULATORY COMPLEX PROTEIN 1"/>
    <property type="match status" value="1"/>
</dbReference>
<dbReference type="PANTHER" id="PTHR21625">
    <property type="entry name" value="NYD-SP28 PROTEIN"/>
    <property type="match status" value="1"/>
</dbReference>
<dbReference type="Pfam" id="PF14772">
    <property type="entry name" value="NYD-SP28"/>
    <property type="match status" value="1"/>
</dbReference>
<dbReference type="Pfam" id="PF14775">
    <property type="entry name" value="NYD-SP28_assoc"/>
    <property type="match status" value="1"/>
</dbReference>
<reference key="1">
    <citation type="journal article" date="2005" name="Science">
        <title>The transcriptional landscape of the mammalian genome.</title>
        <authorList>
            <person name="Carninci P."/>
            <person name="Kasukawa T."/>
            <person name="Katayama S."/>
            <person name="Gough J."/>
            <person name="Frith M.C."/>
            <person name="Maeda N."/>
            <person name="Oyama R."/>
            <person name="Ravasi T."/>
            <person name="Lenhard B."/>
            <person name="Wells C."/>
            <person name="Kodzius R."/>
            <person name="Shimokawa K."/>
            <person name="Bajic V.B."/>
            <person name="Brenner S.E."/>
            <person name="Batalov S."/>
            <person name="Forrest A.R."/>
            <person name="Zavolan M."/>
            <person name="Davis M.J."/>
            <person name="Wilming L.G."/>
            <person name="Aidinis V."/>
            <person name="Allen J.E."/>
            <person name="Ambesi-Impiombato A."/>
            <person name="Apweiler R."/>
            <person name="Aturaliya R.N."/>
            <person name="Bailey T.L."/>
            <person name="Bansal M."/>
            <person name="Baxter L."/>
            <person name="Beisel K.W."/>
            <person name="Bersano T."/>
            <person name="Bono H."/>
            <person name="Chalk A.M."/>
            <person name="Chiu K.P."/>
            <person name="Choudhary V."/>
            <person name="Christoffels A."/>
            <person name="Clutterbuck D.R."/>
            <person name="Crowe M.L."/>
            <person name="Dalla E."/>
            <person name="Dalrymple B.P."/>
            <person name="de Bono B."/>
            <person name="Della Gatta G."/>
            <person name="di Bernardo D."/>
            <person name="Down T."/>
            <person name="Engstrom P."/>
            <person name="Fagiolini M."/>
            <person name="Faulkner G."/>
            <person name="Fletcher C.F."/>
            <person name="Fukushima T."/>
            <person name="Furuno M."/>
            <person name="Futaki S."/>
            <person name="Gariboldi M."/>
            <person name="Georgii-Hemming P."/>
            <person name="Gingeras T.R."/>
            <person name="Gojobori T."/>
            <person name="Green R.E."/>
            <person name="Gustincich S."/>
            <person name="Harbers M."/>
            <person name="Hayashi Y."/>
            <person name="Hensch T.K."/>
            <person name="Hirokawa N."/>
            <person name="Hill D."/>
            <person name="Huminiecki L."/>
            <person name="Iacono M."/>
            <person name="Ikeo K."/>
            <person name="Iwama A."/>
            <person name="Ishikawa T."/>
            <person name="Jakt M."/>
            <person name="Kanapin A."/>
            <person name="Katoh M."/>
            <person name="Kawasawa Y."/>
            <person name="Kelso J."/>
            <person name="Kitamura H."/>
            <person name="Kitano H."/>
            <person name="Kollias G."/>
            <person name="Krishnan S.P."/>
            <person name="Kruger A."/>
            <person name="Kummerfeld S.K."/>
            <person name="Kurochkin I.V."/>
            <person name="Lareau L.F."/>
            <person name="Lazarevic D."/>
            <person name="Lipovich L."/>
            <person name="Liu J."/>
            <person name="Liuni S."/>
            <person name="McWilliam S."/>
            <person name="Madan Babu M."/>
            <person name="Madera M."/>
            <person name="Marchionni L."/>
            <person name="Matsuda H."/>
            <person name="Matsuzawa S."/>
            <person name="Miki H."/>
            <person name="Mignone F."/>
            <person name="Miyake S."/>
            <person name="Morris K."/>
            <person name="Mottagui-Tabar S."/>
            <person name="Mulder N."/>
            <person name="Nakano N."/>
            <person name="Nakauchi H."/>
            <person name="Ng P."/>
            <person name="Nilsson R."/>
            <person name="Nishiguchi S."/>
            <person name="Nishikawa S."/>
            <person name="Nori F."/>
            <person name="Ohara O."/>
            <person name="Okazaki Y."/>
            <person name="Orlando V."/>
            <person name="Pang K.C."/>
            <person name="Pavan W.J."/>
            <person name="Pavesi G."/>
            <person name="Pesole G."/>
            <person name="Petrovsky N."/>
            <person name="Piazza S."/>
            <person name="Reed J."/>
            <person name="Reid J.F."/>
            <person name="Ring B.Z."/>
            <person name="Ringwald M."/>
            <person name="Rost B."/>
            <person name="Ruan Y."/>
            <person name="Salzberg S.L."/>
            <person name="Sandelin A."/>
            <person name="Schneider C."/>
            <person name="Schoenbach C."/>
            <person name="Sekiguchi K."/>
            <person name="Semple C.A."/>
            <person name="Seno S."/>
            <person name="Sessa L."/>
            <person name="Sheng Y."/>
            <person name="Shibata Y."/>
            <person name="Shimada H."/>
            <person name="Shimada K."/>
            <person name="Silva D."/>
            <person name="Sinclair B."/>
            <person name="Sperling S."/>
            <person name="Stupka E."/>
            <person name="Sugiura K."/>
            <person name="Sultana R."/>
            <person name="Takenaka Y."/>
            <person name="Taki K."/>
            <person name="Tammoja K."/>
            <person name="Tan S.L."/>
            <person name="Tang S."/>
            <person name="Taylor M.S."/>
            <person name="Tegner J."/>
            <person name="Teichmann S.A."/>
            <person name="Ueda H.R."/>
            <person name="van Nimwegen E."/>
            <person name="Verardo R."/>
            <person name="Wei C.L."/>
            <person name="Yagi K."/>
            <person name="Yamanishi H."/>
            <person name="Zabarovsky E."/>
            <person name="Zhu S."/>
            <person name="Zimmer A."/>
            <person name="Hide W."/>
            <person name="Bult C."/>
            <person name="Grimmond S.M."/>
            <person name="Teasdale R.D."/>
            <person name="Liu E.T."/>
            <person name="Brusic V."/>
            <person name="Quackenbush J."/>
            <person name="Wahlestedt C."/>
            <person name="Mattick J.S."/>
            <person name="Hume D.A."/>
            <person name="Kai C."/>
            <person name="Sasaki D."/>
            <person name="Tomaru Y."/>
            <person name="Fukuda S."/>
            <person name="Kanamori-Katayama M."/>
            <person name="Suzuki M."/>
            <person name="Aoki J."/>
            <person name="Arakawa T."/>
            <person name="Iida J."/>
            <person name="Imamura K."/>
            <person name="Itoh M."/>
            <person name="Kato T."/>
            <person name="Kawaji H."/>
            <person name="Kawagashira N."/>
            <person name="Kawashima T."/>
            <person name="Kojima M."/>
            <person name="Kondo S."/>
            <person name="Konno H."/>
            <person name="Nakano K."/>
            <person name="Ninomiya N."/>
            <person name="Nishio T."/>
            <person name="Okada M."/>
            <person name="Plessy C."/>
            <person name="Shibata K."/>
            <person name="Shiraki T."/>
            <person name="Suzuki S."/>
            <person name="Tagami M."/>
            <person name="Waki K."/>
            <person name="Watahiki A."/>
            <person name="Okamura-Oho Y."/>
            <person name="Suzuki H."/>
            <person name="Kawai J."/>
            <person name="Hayashizaki Y."/>
        </authorList>
    </citation>
    <scope>NUCLEOTIDE SEQUENCE [LARGE SCALE MRNA]</scope>
    <source>
        <strain>C57BL/6J</strain>
        <tissue>Corpora quadrigemina</tissue>
    </source>
</reference>
<reference key="2">
    <citation type="journal article" date="2004" name="Genome Res.">
        <title>The status, quality, and expansion of the NIH full-length cDNA project: the Mammalian Gene Collection (MGC).</title>
        <authorList>
            <consortium name="The MGC Project Team"/>
        </authorList>
    </citation>
    <scope>NUCLEOTIDE SEQUENCE [LARGE SCALE MRNA]</scope>
    <source>
        <tissue>Brain</tissue>
    </source>
</reference>
<reference key="3">
    <citation type="journal article" date="2010" name="Cell">
        <title>A tissue-specific atlas of mouse protein phosphorylation and expression.</title>
        <authorList>
            <person name="Huttlin E.L."/>
            <person name="Jedrychowski M.P."/>
            <person name="Elias J.E."/>
            <person name="Goswami T."/>
            <person name="Rad R."/>
            <person name="Beausoleil S.A."/>
            <person name="Villen J."/>
            <person name="Haas W."/>
            <person name="Sowa M.E."/>
            <person name="Gygi S.P."/>
        </authorList>
    </citation>
    <scope>IDENTIFICATION BY MASS SPECTROMETRY [LARGE SCALE ANALYSIS]</scope>
    <source>
        <tissue>Testis</tissue>
    </source>
</reference>
<reference key="4">
    <citation type="journal article" date="2013" name="Nat. Genet.">
        <title>The nexin-dynein regulatory complex subunit DRC1 is essential for motile cilia function in algae and humans.</title>
        <authorList>
            <person name="Wirschell M."/>
            <person name="Olbrich H."/>
            <person name="Werner C."/>
            <person name="Tritschler D."/>
            <person name="Bower R."/>
            <person name="Sale W.S."/>
            <person name="Loges N.T."/>
            <person name="Pennekamp P."/>
            <person name="Lindberg S."/>
            <person name="Stenram U."/>
            <person name="Carlen B."/>
            <person name="Horak E."/>
            <person name="Kohler G."/>
            <person name="Nurnberg P."/>
            <person name="Nurnberg G."/>
            <person name="Porter M.E."/>
            <person name="Omran H."/>
        </authorList>
    </citation>
    <scope>DEVELOPMENTAL STAGE</scope>
</reference>
<reference key="5">
    <citation type="journal article" date="2021" name="Hum. Mol. Genet.">
        <title>Loss of DRC1 function leads to multiple morphological abnormalities of the sperm flagella and male infertility in human and mouse.</title>
        <authorList>
            <person name="Zhang J."/>
            <person name="He X."/>
            <person name="Wu H."/>
            <person name="Zhang X."/>
            <person name="Yang S."/>
            <person name="Liu C."/>
            <person name="Liu S."/>
            <person name="Hua R."/>
            <person name="Zhou S."/>
            <person name="Zhao S."/>
            <person name="Hu F."/>
            <person name="Zhang J."/>
            <person name="Liu W."/>
            <person name="Cheng H."/>
            <person name="Gao Y."/>
            <person name="Zhang F."/>
            <person name="Cao Y."/>
            <person name="Liu M."/>
        </authorList>
    </citation>
    <scope>FUNCTION</scope>
    <scope>MUTAGENESIS OF 244-TRP--LYS-753 AND 554-ARG--LYS-753</scope>
    <scope>DISRUPTION PHENOTYPE</scope>
</reference>
<sequence length="753" mass="88507">MNPSGTIGVLEQNGEEHLATPILGPSVHSDNPQERIQARRLRIAARQEARRREALGEYLDGKKESEEEQSKSYKQKEESRLKLTKLLLCGTELVTNIQVAADVREIHRRVEEEETKRQRLEKLENEVKTSQDKFDEITAKWEEGRRKRIPQELWEMLNSQQVHCAELIEDKNKLANELQQELKIKDDQYVKDLKKQSEDITLILERMEEQVKNVMKNFRQELIHIEKAFESERQELLSSNKKKWERALQAHNAKELEYLTNRMKKVEDYEKQLNKQRVWDCEEYNTIKIKLEQDVQILEQQLQQMKATYQLNQEKLEYNFQVLKKRDEESTVIKSQQKRKLNRLHDVVNNLRTKYTKQIRQFQDDNQSLTSDYKRLVTQFKDLQKALRHFIIIDEEKFREIWLMNEAEAKELAQRAFDVDRIIHSQHLGLPWNMPDLWFLNNVGPISLQQQKSVTQILEELLLQTEDEATEAAMSEDEDYMDLPNQISAKTTTKVLMLLCDESGFLIESKLLSLLHPLEKSECYLLRLDAIFSALAIEDEDDLYKLVNFFLRYRAHRLSSAQASSSIHSNVERTSLMSALERLSLMSQTDKGSMVSKSDQEPTEQEDEQEGDNASLSSRELEEQEDLSSPRFIHPNDVLKILEAFVTGLKKPKDAQPVLKLKKETRDNSKDTEYWESLAAVIPFFKQNLWDALYKALEKYYLVLTERAKLLMENESLEQQNAEMQSLLQQYLQAKVNTELQIPPTQGFRMPSK</sequence>
<feature type="chain" id="PRO_0000277883" description="Dynein regulatory complex protein 1">
    <location>
        <begin position="1"/>
        <end position="753"/>
    </location>
</feature>
<feature type="region of interest" description="Disordered" evidence="4">
    <location>
        <begin position="1"/>
        <end position="33"/>
    </location>
</feature>
<feature type="region of interest" description="Disordered" evidence="4">
    <location>
        <begin position="55"/>
        <end position="76"/>
    </location>
</feature>
<feature type="region of interest" description="Disordered" evidence="4">
    <location>
        <begin position="587"/>
        <end position="628"/>
    </location>
</feature>
<feature type="coiled-coil region" evidence="3">
    <location>
        <begin position="100"/>
        <end position="388"/>
    </location>
</feature>
<feature type="coiled-coil region" evidence="3">
    <location>
        <begin position="703"/>
        <end position="739"/>
    </location>
</feature>
<feature type="compositionally biased region" description="Polar residues" evidence="4">
    <location>
        <begin position="587"/>
        <end position="597"/>
    </location>
</feature>
<feature type="compositionally biased region" description="Acidic residues" evidence="4">
    <location>
        <begin position="601"/>
        <end position="611"/>
    </location>
</feature>
<feature type="mutagenesis site" description="Loss of DRC1 in spermatozoa of homozygous mice. Sperm flagella have a disorganized axoneme and lack N-DRC, radial spokes and dynein arms." evidence="6">
    <location>
        <begin position="244"/>
        <end position="753"/>
    </location>
</feature>
<feature type="mutagenesis site" description="Loss of DRC1 in spermatozoa of homozygous mice. Sperm flagella have a disorganized axoneme and lack N-DRC, radial spokes and dynein arms." evidence="6">
    <location>
        <begin position="554"/>
        <end position="753"/>
    </location>
</feature>
<feature type="sequence conflict" description="In Ref. 2; AAI50864." evidence="7" ref="2">
    <original>V</original>
    <variation>M</variation>
    <location>
        <position position="571"/>
    </location>
</feature>
<evidence type="ECO:0000250" key="1">
    <source>
        <dbReference type="UniProtKB" id="P0DL09"/>
    </source>
</evidence>
<evidence type="ECO:0000250" key="2">
    <source>
        <dbReference type="UniProtKB" id="Q96MC2"/>
    </source>
</evidence>
<evidence type="ECO:0000255" key="3"/>
<evidence type="ECO:0000256" key="4">
    <source>
        <dbReference type="SAM" id="MobiDB-lite"/>
    </source>
</evidence>
<evidence type="ECO:0000269" key="5">
    <source>
    </source>
</evidence>
<evidence type="ECO:0000269" key="6">
    <source>
    </source>
</evidence>
<evidence type="ECO:0000305" key="7"/>
<proteinExistence type="evidence at protein level"/>